<organism>
    <name type="scientific">Salmonella typhi</name>
    <dbReference type="NCBI Taxonomy" id="90370"/>
    <lineage>
        <taxon>Bacteria</taxon>
        <taxon>Pseudomonadati</taxon>
        <taxon>Pseudomonadota</taxon>
        <taxon>Gammaproteobacteria</taxon>
        <taxon>Enterobacterales</taxon>
        <taxon>Enterobacteriaceae</taxon>
        <taxon>Salmonella</taxon>
    </lineage>
</organism>
<gene>
    <name evidence="1" type="primary">fadI</name>
    <name type="ordered locus">STY2621</name>
    <name type="ordered locus">t0475</name>
</gene>
<evidence type="ECO:0000255" key="1">
    <source>
        <dbReference type="HAMAP-Rule" id="MF_01618"/>
    </source>
</evidence>
<name>FADI_SALTI</name>
<protein>
    <recommendedName>
        <fullName evidence="1">3-ketoacyl-CoA thiolase</fullName>
        <ecNumber evidence="1">2.3.1.16</ecNumber>
    </recommendedName>
    <alternativeName>
        <fullName evidence="1">ACSs</fullName>
    </alternativeName>
    <alternativeName>
        <fullName evidence="1">Acetyl-CoA acyltransferase</fullName>
    </alternativeName>
    <alternativeName>
        <fullName evidence="1">Acyl-CoA ligase</fullName>
    </alternativeName>
    <alternativeName>
        <fullName evidence="1">Beta-ketothiolase</fullName>
    </alternativeName>
    <alternativeName>
        <fullName evidence="1">Fatty acid oxidation complex subunit beta</fullName>
    </alternativeName>
</protein>
<proteinExistence type="inferred from homology"/>
<keyword id="KW-0012">Acyltransferase</keyword>
<keyword id="KW-0963">Cytoplasm</keyword>
<keyword id="KW-0276">Fatty acid metabolism</keyword>
<keyword id="KW-0442">Lipid degradation</keyword>
<keyword id="KW-0443">Lipid metabolism</keyword>
<keyword id="KW-0808">Transferase</keyword>
<sequence length="436" mass="46530">MRQALPLVTRQGDRIAIVSGLRTPFARQATAFHGIPAVDLGKMVVGELLARSEIPADAIEQLVFGQVVQMPEAPNIAREIVLGTGMNVHTDAYSVSRACATSFQAVANVAESLMAGTIRAGIAGGADSSSVLPIGVSKALARVLVDVNKARTTRQRLTLFSRLRLRDLLPVPPAVAEYSTGLRMGDTAEQMAKTYGITREQQDALAHRSHQRAAQAWAEGKLAEEVMTTYVPPYKNPFAEDNNIRGASTLADYAKLRPAFDRKHGSVTAANSTPLTDGAAAVILMTESRAKELGLRPLGYLRSYAFTAIDVWQDMLLGPAWSTPLALERAGLTMADLTLFDMHEAFAAQTLANLQLLGSERFAREVFGRAQATGEVDDAKFNVLGGSIAYGHPFAATGARMITQTLHELRRRGGGFGLVTACAAGGLGAAMVLEAE</sequence>
<reference key="1">
    <citation type="journal article" date="2001" name="Nature">
        <title>Complete genome sequence of a multiple drug resistant Salmonella enterica serovar Typhi CT18.</title>
        <authorList>
            <person name="Parkhill J."/>
            <person name="Dougan G."/>
            <person name="James K.D."/>
            <person name="Thomson N.R."/>
            <person name="Pickard D."/>
            <person name="Wain J."/>
            <person name="Churcher C.M."/>
            <person name="Mungall K.L."/>
            <person name="Bentley S.D."/>
            <person name="Holden M.T.G."/>
            <person name="Sebaihia M."/>
            <person name="Baker S."/>
            <person name="Basham D."/>
            <person name="Brooks K."/>
            <person name="Chillingworth T."/>
            <person name="Connerton P."/>
            <person name="Cronin A."/>
            <person name="Davis P."/>
            <person name="Davies R.M."/>
            <person name="Dowd L."/>
            <person name="White N."/>
            <person name="Farrar J."/>
            <person name="Feltwell T."/>
            <person name="Hamlin N."/>
            <person name="Haque A."/>
            <person name="Hien T.T."/>
            <person name="Holroyd S."/>
            <person name="Jagels K."/>
            <person name="Krogh A."/>
            <person name="Larsen T.S."/>
            <person name="Leather S."/>
            <person name="Moule S."/>
            <person name="O'Gaora P."/>
            <person name="Parry C."/>
            <person name="Quail M.A."/>
            <person name="Rutherford K.M."/>
            <person name="Simmonds M."/>
            <person name="Skelton J."/>
            <person name="Stevens K."/>
            <person name="Whitehead S."/>
            <person name="Barrell B.G."/>
        </authorList>
    </citation>
    <scope>NUCLEOTIDE SEQUENCE [LARGE SCALE GENOMIC DNA]</scope>
    <source>
        <strain>CT18</strain>
    </source>
</reference>
<reference key="2">
    <citation type="journal article" date="2003" name="J. Bacteriol.">
        <title>Comparative genomics of Salmonella enterica serovar Typhi strains Ty2 and CT18.</title>
        <authorList>
            <person name="Deng W."/>
            <person name="Liou S.-R."/>
            <person name="Plunkett G. III"/>
            <person name="Mayhew G.F."/>
            <person name="Rose D.J."/>
            <person name="Burland V."/>
            <person name="Kodoyianni V."/>
            <person name="Schwartz D.C."/>
            <person name="Blattner F.R."/>
        </authorList>
    </citation>
    <scope>NUCLEOTIDE SEQUENCE [LARGE SCALE GENOMIC DNA]</scope>
    <source>
        <strain>ATCC 700931 / Ty2</strain>
    </source>
</reference>
<accession>Q8Z4Y9</accession>
<accession>Q7CBC7</accession>
<feature type="chain" id="PRO_0000206445" description="3-ketoacyl-CoA thiolase">
    <location>
        <begin position="1"/>
        <end position="436"/>
    </location>
</feature>
<feature type="active site" description="Acyl-thioester intermediate" evidence="1">
    <location>
        <position position="99"/>
    </location>
</feature>
<feature type="active site" description="Proton acceptor" evidence="1">
    <location>
        <position position="392"/>
    </location>
</feature>
<feature type="active site" description="Proton acceptor" evidence="1">
    <location>
        <position position="422"/>
    </location>
</feature>
<comment type="function">
    <text evidence="1">Catalyzes the final step of fatty acid oxidation in which acetyl-CoA is released and the CoA ester of a fatty acid two carbons shorter is formed.</text>
</comment>
<comment type="catalytic activity">
    <reaction evidence="1">
        <text>an acyl-CoA + acetyl-CoA = a 3-oxoacyl-CoA + CoA</text>
        <dbReference type="Rhea" id="RHEA:21564"/>
        <dbReference type="ChEBI" id="CHEBI:57287"/>
        <dbReference type="ChEBI" id="CHEBI:57288"/>
        <dbReference type="ChEBI" id="CHEBI:58342"/>
        <dbReference type="ChEBI" id="CHEBI:90726"/>
        <dbReference type="EC" id="2.3.1.16"/>
    </reaction>
</comment>
<comment type="pathway">
    <text evidence="1">Lipid metabolism; fatty acid beta-oxidation.</text>
</comment>
<comment type="subunit">
    <text evidence="1">Heterotetramer of two alpha chains (FadJ) and two beta chains (FadI).</text>
</comment>
<comment type="subcellular location">
    <subcellularLocation>
        <location evidence="1">Cytoplasm</location>
    </subcellularLocation>
</comment>
<comment type="similarity">
    <text evidence="1">Belongs to the thiolase-like superfamily. Thiolase family.</text>
</comment>
<dbReference type="EC" id="2.3.1.16" evidence="1"/>
<dbReference type="EMBL" id="AL513382">
    <property type="protein sequence ID" value="CAD07621.1"/>
    <property type="molecule type" value="Genomic_DNA"/>
</dbReference>
<dbReference type="EMBL" id="AE014613">
    <property type="protein sequence ID" value="AAO68182.1"/>
    <property type="molecule type" value="Genomic_DNA"/>
</dbReference>
<dbReference type="RefSeq" id="NP_456930.1">
    <property type="nucleotide sequence ID" value="NC_003198.1"/>
</dbReference>
<dbReference type="RefSeq" id="WP_001248124.1">
    <property type="nucleotide sequence ID" value="NZ_WSUR01000045.1"/>
</dbReference>
<dbReference type="SMR" id="Q8Z4Y9"/>
<dbReference type="STRING" id="220341.gene:17586518"/>
<dbReference type="KEGG" id="stt:t0475"/>
<dbReference type="KEGG" id="sty:STY2621"/>
<dbReference type="PATRIC" id="fig|220341.7.peg.2654"/>
<dbReference type="eggNOG" id="COG0183">
    <property type="taxonomic scope" value="Bacteria"/>
</dbReference>
<dbReference type="HOGENOM" id="CLU_031026_2_0_6"/>
<dbReference type="OMA" id="MTAFPEP"/>
<dbReference type="OrthoDB" id="8951704at2"/>
<dbReference type="UniPathway" id="UPA00659"/>
<dbReference type="Proteomes" id="UP000000541">
    <property type="component" value="Chromosome"/>
</dbReference>
<dbReference type="Proteomes" id="UP000002670">
    <property type="component" value="Chromosome"/>
</dbReference>
<dbReference type="GO" id="GO:0005829">
    <property type="term" value="C:cytosol"/>
    <property type="evidence" value="ECO:0007669"/>
    <property type="project" value="TreeGrafter"/>
</dbReference>
<dbReference type="GO" id="GO:0003988">
    <property type="term" value="F:acetyl-CoA C-acyltransferase activity"/>
    <property type="evidence" value="ECO:0007669"/>
    <property type="project" value="UniProtKB-UniRule"/>
</dbReference>
<dbReference type="GO" id="GO:0006635">
    <property type="term" value="P:fatty acid beta-oxidation"/>
    <property type="evidence" value="ECO:0007669"/>
    <property type="project" value="UniProtKB-UniRule"/>
</dbReference>
<dbReference type="CDD" id="cd00751">
    <property type="entry name" value="thiolase"/>
    <property type="match status" value="1"/>
</dbReference>
<dbReference type="FunFam" id="3.40.47.10:FF:000011">
    <property type="entry name" value="3-ketoacyl-CoA thiolase"/>
    <property type="match status" value="1"/>
</dbReference>
<dbReference type="Gene3D" id="3.40.47.10">
    <property type="match status" value="1"/>
</dbReference>
<dbReference type="HAMAP" id="MF_01618">
    <property type="entry name" value="FadI"/>
    <property type="match status" value="1"/>
</dbReference>
<dbReference type="InterPro" id="IPR012806">
    <property type="entry name" value="Ac-CoA_C-AcTrfase_FadI"/>
</dbReference>
<dbReference type="InterPro" id="IPR002155">
    <property type="entry name" value="Thiolase"/>
</dbReference>
<dbReference type="InterPro" id="IPR016039">
    <property type="entry name" value="Thiolase-like"/>
</dbReference>
<dbReference type="InterPro" id="IPR020615">
    <property type="entry name" value="Thiolase_acyl_enz_int_AS"/>
</dbReference>
<dbReference type="InterPro" id="IPR020610">
    <property type="entry name" value="Thiolase_AS"/>
</dbReference>
<dbReference type="InterPro" id="IPR020617">
    <property type="entry name" value="Thiolase_C"/>
</dbReference>
<dbReference type="InterPro" id="IPR020613">
    <property type="entry name" value="Thiolase_CS"/>
</dbReference>
<dbReference type="InterPro" id="IPR020616">
    <property type="entry name" value="Thiolase_N"/>
</dbReference>
<dbReference type="NCBIfam" id="TIGR01930">
    <property type="entry name" value="AcCoA-C-Actrans"/>
    <property type="match status" value="1"/>
</dbReference>
<dbReference type="NCBIfam" id="TIGR02446">
    <property type="entry name" value="FadI"/>
    <property type="match status" value="1"/>
</dbReference>
<dbReference type="NCBIfam" id="NF006516">
    <property type="entry name" value="PRK08963.1"/>
    <property type="match status" value="1"/>
</dbReference>
<dbReference type="PANTHER" id="PTHR18919:SF107">
    <property type="entry name" value="ACETYL-COA ACETYLTRANSFERASE, CYTOSOLIC"/>
    <property type="match status" value="1"/>
</dbReference>
<dbReference type="PANTHER" id="PTHR18919">
    <property type="entry name" value="ACETYL-COA C-ACYLTRANSFERASE"/>
    <property type="match status" value="1"/>
</dbReference>
<dbReference type="Pfam" id="PF02803">
    <property type="entry name" value="Thiolase_C"/>
    <property type="match status" value="1"/>
</dbReference>
<dbReference type="Pfam" id="PF00108">
    <property type="entry name" value="Thiolase_N"/>
    <property type="match status" value="1"/>
</dbReference>
<dbReference type="PIRSF" id="PIRSF000429">
    <property type="entry name" value="Ac-CoA_Ac_transf"/>
    <property type="match status" value="1"/>
</dbReference>
<dbReference type="SUPFAM" id="SSF53901">
    <property type="entry name" value="Thiolase-like"/>
    <property type="match status" value="2"/>
</dbReference>
<dbReference type="PROSITE" id="PS00098">
    <property type="entry name" value="THIOLASE_1"/>
    <property type="match status" value="1"/>
</dbReference>
<dbReference type="PROSITE" id="PS00737">
    <property type="entry name" value="THIOLASE_2"/>
    <property type="match status" value="1"/>
</dbReference>
<dbReference type="PROSITE" id="PS00099">
    <property type="entry name" value="THIOLASE_3"/>
    <property type="match status" value="1"/>
</dbReference>